<gene>
    <name type="primary">SH2</name>
</gene>
<comment type="function">
    <text>This protein plays a role in synthesis of starch. It catalyzes the synthesis of the activated glycosyl donor, ADP-glucose from Glc-1-P and ATP.</text>
</comment>
<comment type="catalytic activity">
    <reaction>
        <text>alpha-D-glucose 1-phosphate + ATP + H(+) = ADP-alpha-D-glucose + diphosphate</text>
        <dbReference type="Rhea" id="RHEA:12120"/>
        <dbReference type="ChEBI" id="CHEBI:15378"/>
        <dbReference type="ChEBI" id="CHEBI:30616"/>
        <dbReference type="ChEBI" id="CHEBI:33019"/>
        <dbReference type="ChEBI" id="CHEBI:57498"/>
        <dbReference type="ChEBI" id="CHEBI:58601"/>
        <dbReference type="EC" id="2.7.7.27"/>
    </reaction>
</comment>
<comment type="activity regulation">
    <text>Activated by 3'phosphoglycerate, inhibited by orthophosphate. Allosteric regulation.</text>
</comment>
<comment type="pathway">
    <text>Glycan biosynthesis; starch biosynthesis.</text>
</comment>
<comment type="subunit">
    <text>Heterotetramer.</text>
</comment>
<comment type="subcellular location">
    <subcellularLocation>
        <location>Plastid</location>
        <location>Chloroplast</location>
    </subcellularLocation>
    <subcellularLocation>
        <location>Plastid</location>
        <location>Amyloplast</location>
    </subcellularLocation>
    <text>Found in the chloroplast in leaf. Found in the plastid in the developing endosperm.</text>
</comment>
<comment type="tissue specificity">
    <text>Endosperm.</text>
</comment>
<comment type="similarity">
    <text evidence="2">Belongs to the bacterial/plant glucose-1-phosphate adenylyltransferase family.</text>
</comment>
<comment type="sequence caution" evidence="2">
    <conflict type="erroneous initiation">
        <sequence resource="EMBL-CDS" id="AAB24191"/>
    </conflict>
</comment>
<feature type="transit peptide" description="Chloroplast" evidence="1">
    <location>
        <begin position="1"/>
        <end position="45"/>
    </location>
</feature>
<feature type="chain" id="PRO_0000011165" description="Glucose-1-phosphate adenylyltransferase large subunit 1, chloroplastic/amyloplastic">
    <location>
        <begin position="46"/>
        <end position="516"/>
    </location>
</feature>
<feature type="sequence conflict" description="In Ref. 1; AAB24191." evidence="2" ref="1">
    <original>T</original>
    <variation>I</variation>
    <location>
        <position position="436"/>
    </location>
</feature>
<feature type="sequence conflict" description="In Ref. 1; AAB24191." evidence="2" ref="1">
    <original>V</original>
    <variation>I</variation>
    <location>
        <position position="454"/>
    </location>
</feature>
<feature type="sequence conflict" description="In Ref. 1; AAB24191." evidence="2" ref="1">
    <location>
        <begin position="495"/>
        <end position="514"/>
    </location>
</feature>
<dbReference type="EC" id="2.7.7.27"/>
<dbReference type="EMBL" id="S48563">
    <property type="protein sequence ID" value="AAB24191.2"/>
    <property type="status" value="ALT_INIT"/>
    <property type="molecule type" value="mRNA"/>
</dbReference>
<dbReference type="EMBL" id="M81603">
    <property type="protein sequence ID" value="AAB52952.1"/>
    <property type="molecule type" value="Genomic_DNA"/>
</dbReference>
<dbReference type="PIR" id="JQ1005">
    <property type="entry name" value="JQ1005"/>
</dbReference>
<dbReference type="RefSeq" id="NP_001121104.1">
    <property type="nucleotide sequence ID" value="NM_001127632.1"/>
</dbReference>
<dbReference type="SMR" id="P55241"/>
<dbReference type="FunCoup" id="P55241">
    <property type="interactions" value="278"/>
</dbReference>
<dbReference type="STRING" id="4577.P55241"/>
<dbReference type="PaxDb" id="4577-GRMZM2G429899_P01"/>
<dbReference type="GeneID" id="542761"/>
<dbReference type="KEGG" id="zma:542761"/>
<dbReference type="MaizeGDB" id="85022"/>
<dbReference type="eggNOG" id="KOG1322">
    <property type="taxonomic scope" value="Eukaryota"/>
</dbReference>
<dbReference type="InParanoid" id="P55241"/>
<dbReference type="OrthoDB" id="1733332at2759"/>
<dbReference type="BRENDA" id="2.7.7.27">
    <property type="organism ID" value="6752"/>
</dbReference>
<dbReference type="SABIO-RK" id="P55241"/>
<dbReference type="UniPathway" id="UPA00152"/>
<dbReference type="Proteomes" id="UP000007305">
    <property type="component" value="Unplaced"/>
</dbReference>
<dbReference type="ExpressionAtlas" id="P55241">
    <property type="expression patterns" value="baseline and differential"/>
</dbReference>
<dbReference type="GO" id="GO:0009501">
    <property type="term" value="C:amyloplast"/>
    <property type="evidence" value="ECO:0007669"/>
    <property type="project" value="UniProtKB-SubCell"/>
</dbReference>
<dbReference type="GO" id="GO:0009507">
    <property type="term" value="C:chloroplast"/>
    <property type="evidence" value="ECO:0007669"/>
    <property type="project" value="UniProtKB-SubCell"/>
</dbReference>
<dbReference type="GO" id="GO:0005524">
    <property type="term" value="F:ATP binding"/>
    <property type="evidence" value="ECO:0007669"/>
    <property type="project" value="UniProtKB-KW"/>
</dbReference>
<dbReference type="GO" id="GO:0008878">
    <property type="term" value="F:glucose-1-phosphate adenylyltransferase activity"/>
    <property type="evidence" value="ECO:0007669"/>
    <property type="project" value="UniProtKB-EC"/>
</dbReference>
<dbReference type="GO" id="GO:0005978">
    <property type="term" value="P:glycogen biosynthetic process"/>
    <property type="evidence" value="ECO:0007669"/>
    <property type="project" value="InterPro"/>
</dbReference>
<dbReference type="GO" id="GO:0019252">
    <property type="term" value="P:starch biosynthetic process"/>
    <property type="evidence" value="ECO:0007669"/>
    <property type="project" value="UniProtKB-UniPathway"/>
</dbReference>
<dbReference type="CDD" id="cd02508">
    <property type="entry name" value="ADP_Glucose_PP"/>
    <property type="match status" value="1"/>
</dbReference>
<dbReference type="CDD" id="cd04651">
    <property type="entry name" value="LbH_G1P_AT_C"/>
    <property type="match status" value="1"/>
</dbReference>
<dbReference type="Gene3D" id="2.160.10.10">
    <property type="entry name" value="Hexapeptide repeat proteins"/>
    <property type="match status" value="1"/>
</dbReference>
<dbReference type="Gene3D" id="3.90.550.10">
    <property type="entry name" value="Spore Coat Polysaccharide Biosynthesis Protein SpsA, Chain A"/>
    <property type="match status" value="1"/>
</dbReference>
<dbReference type="InterPro" id="IPR011831">
    <property type="entry name" value="ADP-Glc_PPase"/>
</dbReference>
<dbReference type="InterPro" id="IPR005836">
    <property type="entry name" value="ADP_Glu_pyroP_CS"/>
</dbReference>
<dbReference type="InterPro" id="IPR005835">
    <property type="entry name" value="NTP_transferase_dom"/>
</dbReference>
<dbReference type="InterPro" id="IPR029044">
    <property type="entry name" value="Nucleotide-diphossugar_trans"/>
</dbReference>
<dbReference type="InterPro" id="IPR011004">
    <property type="entry name" value="Trimer_LpxA-like_sf"/>
</dbReference>
<dbReference type="NCBIfam" id="TIGR02091">
    <property type="entry name" value="glgC"/>
    <property type="match status" value="1"/>
</dbReference>
<dbReference type="NCBIfam" id="NF002772">
    <property type="entry name" value="PRK02862.1"/>
    <property type="match status" value="1"/>
</dbReference>
<dbReference type="PANTHER" id="PTHR43523:SF1">
    <property type="entry name" value="GLUCOSE-1-PHOSPHATE ADENYLYLTRANSFERASE LARGE SUBUNIT 2, CYTOSOLIC"/>
    <property type="match status" value="1"/>
</dbReference>
<dbReference type="PANTHER" id="PTHR43523">
    <property type="entry name" value="GLUCOSE-1-PHOSPHATE ADENYLYLTRANSFERASE-RELATED"/>
    <property type="match status" value="1"/>
</dbReference>
<dbReference type="Pfam" id="PF25247">
    <property type="entry name" value="LbH_GLGC"/>
    <property type="match status" value="1"/>
</dbReference>
<dbReference type="Pfam" id="PF00483">
    <property type="entry name" value="NTP_transferase"/>
    <property type="match status" value="1"/>
</dbReference>
<dbReference type="SUPFAM" id="SSF53448">
    <property type="entry name" value="Nucleotide-diphospho-sugar transferases"/>
    <property type="match status" value="1"/>
</dbReference>
<dbReference type="SUPFAM" id="SSF51161">
    <property type="entry name" value="Trimeric LpxA-like enzymes"/>
    <property type="match status" value="1"/>
</dbReference>
<dbReference type="PROSITE" id="PS00808">
    <property type="entry name" value="ADP_GLC_PYROPHOSPH_1"/>
    <property type="match status" value="1"/>
</dbReference>
<dbReference type="PROSITE" id="PS00809">
    <property type="entry name" value="ADP_GLC_PYROPHOSPH_2"/>
    <property type="match status" value="1"/>
</dbReference>
<dbReference type="PROSITE" id="PS00810">
    <property type="entry name" value="ADP_GLC_PYROPHOSPH_3"/>
    <property type="match status" value="1"/>
</dbReference>
<proteinExistence type="evidence at protein level"/>
<keyword id="KW-0021">Allosteric enzyme</keyword>
<keyword id="KW-0035">Amyloplast</keyword>
<keyword id="KW-0067">ATP-binding</keyword>
<keyword id="KW-0150">Chloroplast</keyword>
<keyword id="KW-0547">Nucleotide-binding</keyword>
<keyword id="KW-0548">Nucleotidyltransferase</keyword>
<keyword id="KW-0934">Plastid</keyword>
<keyword id="KW-1185">Reference proteome</keyword>
<keyword id="KW-0750">Starch biosynthesis</keyword>
<keyword id="KW-0808">Transferase</keyword>
<keyword id="KW-0809">Transit peptide</keyword>
<accession>P55241</accession>
<sequence length="516" mass="57071">MQFALALDTNSGPHQIRSCEGDGIDRLEKLSIGGRKQEKALRNRCFGGRVAATTQCILTSDACPETLHSQTQSSRKNYADANRVSAIILGGGTGSQLFPLTSTRATPAVPVGGCYRLIDIPMSNCFNSGINKIFVMSQFNSTSLNRHIHRTYLEGGINFADGSVQVLAATQMPEEPAGWFQGTADSIRKFIWVLEDYYSHKSIDNIVILSGDQLYRMNYMELVQKHVEDDADITISCAPVDESRASKNGLVKIDHTGRVLQFFEKPKGADLNSMRVETNFLSYAIDDAQKYPYLASMGIYVFKKDALLDLLKSKYTQLHDFGSEILPRAVLDHSVQACIFTGYWEDVGTIKSFFDANLALTEQPSKFDFYDPKTPFFTAPRCLPPTQLDKCKMKYAFISDGCLLRECNIEHSVIGVCSRVSSGCELKDSVMMGADTYETEEEASKLLLAGKVPVGIGRNTKIRNCIIDMNARIGKNVVITNSKGIQEADHPEEGYYIRSGIVVILKNATINDGSVI</sequence>
<name>GLGL1_MAIZE</name>
<evidence type="ECO:0000255" key="1"/>
<evidence type="ECO:0000305" key="2"/>
<organism>
    <name type="scientific">Zea mays</name>
    <name type="common">Maize</name>
    <dbReference type="NCBI Taxonomy" id="4577"/>
    <lineage>
        <taxon>Eukaryota</taxon>
        <taxon>Viridiplantae</taxon>
        <taxon>Streptophyta</taxon>
        <taxon>Embryophyta</taxon>
        <taxon>Tracheophyta</taxon>
        <taxon>Spermatophyta</taxon>
        <taxon>Magnoliopsida</taxon>
        <taxon>Liliopsida</taxon>
        <taxon>Poales</taxon>
        <taxon>Poaceae</taxon>
        <taxon>PACMAD clade</taxon>
        <taxon>Panicoideae</taxon>
        <taxon>Andropogonodae</taxon>
        <taxon>Andropogoneae</taxon>
        <taxon>Tripsacinae</taxon>
        <taxon>Zea</taxon>
    </lineage>
</organism>
<protein>
    <recommendedName>
        <fullName>Glucose-1-phosphate adenylyltransferase large subunit 1, chloroplastic/amyloplastic</fullName>
        <ecNumber>2.7.7.27</ecNumber>
    </recommendedName>
    <alternativeName>
        <fullName>ADP-glucose pyrophosphorylase</fullName>
    </alternativeName>
    <alternativeName>
        <fullName>ADP-glucose synthase</fullName>
    </alternativeName>
    <alternativeName>
        <fullName>AGPase S</fullName>
    </alternativeName>
    <alternativeName>
        <fullName>Alpha-D-glucose-1-phosphate adenyl transferase</fullName>
    </alternativeName>
    <alternativeName>
        <fullName>Shrunken-2</fullName>
    </alternativeName>
</protein>
<reference key="1">
    <citation type="journal article" date="1990" name="Plant Cell">
        <title>Identification and molecular characterization of shrunken-2 cDNA clones of maize.</title>
        <authorList>
            <person name="Bhave M.R."/>
            <person name="Lawrence S."/>
            <person name="Barton C."/>
            <person name="Hannah L.C."/>
        </authorList>
    </citation>
    <scope>NUCLEOTIDE SEQUENCE [MRNA]</scope>
</reference>
<reference key="2">
    <citation type="journal article" date="1992" name="Plant Physiol.">
        <title>Genomic nucleotide sequence of a wild-type shrunken-2 allele of Zea mays.</title>
        <authorList>
            <person name="Hannah L.C."/>
            <person name="Shaw J.R."/>
        </authorList>
    </citation>
    <scope>NUCLEOTIDE SEQUENCE [GENOMIC DNA]</scope>
    <scope>SEQUENCE REVISION</scope>
    <source>
        <strain>cv. Black Mexican Sweet</strain>
        <tissue>Leaf</tissue>
    </source>
</reference>
<reference key="3">
    <citation type="journal article" date="1994" name="Mol. Gen. Genet.">
        <title>ADP-glucose pyrophosphorylase in shrunken-2 and brittle-2 mutants of maize.</title>
        <authorList>
            <person name="Giroux M.J."/>
            <person name="Hannah L.C."/>
        </authorList>
    </citation>
    <scope>CHARACTERIZATION</scope>
</reference>